<name>ASP_DROME</name>
<proteinExistence type="evidence at protein level"/>
<reference evidence="14" key="1">
    <citation type="journal article" date="2000" name="Science">
        <title>The genome sequence of Drosophila melanogaster.</title>
        <authorList>
            <person name="Adams M.D."/>
            <person name="Celniker S.E."/>
            <person name="Holt R.A."/>
            <person name="Evans C.A."/>
            <person name="Gocayne J.D."/>
            <person name="Amanatides P.G."/>
            <person name="Scherer S.E."/>
            <person name="Li P.W."/>
            <person name="Hoskins R.A."/>
            <person name="Galle R.F."/>
            <person name="George R.A."/>
            <person name="Lewis S.E."/>
            <person name="Richards S."/>
            <person name="Ashburner M."/>
            <person name="Henderson S.N."/>
            <person name="Sutton G.G."/>
            <person name="Wortman J.R."/>
            <person name="Yandell M.D."/>
            <person name="Zhang Q."/>
            <person name="Chen L.X."/>
            <person name="Brandon R.C."/>
            <person name="Rogers Y.-H.C."/>
            <person name="Blazej R.G."/>
            <person name="Champe M."/>
            <person name="Pfeiffer B.D."/>
            <person name="Wan K.H."/>
            <person name="Doyle C."/>
            <person name="Baxter E.G."/>
            <person name="Helt G."/>
            <person name="Nelson C.R."/>
            <person name="Miklos G.L.G."/>
            <person name="Abril J.F."/>
            <person name="Agbayani A."/>
            <person name="An H.-J."/>
            <person name="Andrews-Pfannkoch C."/>
            <person name="Baldwin D."/>
            <person name="Ballew R.M."/>
            <person name="Basu A."/>
            <person name="Baxendale J."/>
            <person name="Bayraktaroglu L."/>
            <person name="Beasley E.M."/>
            <person name="Beeson K.Y."/>
            <person name="Benos P.V."/>
            <person name="Berman B.P."/>
            <person name="Bhandari D."/>
            <person name="Bolshakov S."/>
            <person name="Borkova D."/>
            <person name="Botchan M.R."/>
            <person name="Bouck J."/>
            <person name="Brokstein P."/>
            <person name="Brottier P."/>
            <person name="Burtis K.C."/>
            <person name="Busam D.A."/>
            <person name="Butler H."/>
            <person name="Cadieu E."/>
            <person name="Center A."/>
            <person name="Chandra I."/>
            <person name="Cherry J.M."/>
            <person name="Cawley S."/>
            <person name="Dahlke C."/>
            <person name="Davenport L.B."/>
            <person name="Davies P."/>
            <person name="de Pablos B."/>
            <person name="Delcher A."/>
            <person name="Deng Z."/>
            <person name="Mays A.D."/>
            <person name="Dew I."/>
            <person name="Dietz S.M."/>
            <person name="Dodson K."/>
            <person name="Doup L.E."/>
            <person name="Downes M."/>
            <person name="Dugan-Rocha S."/>
            <person name="Dunkov B.C."/>
            <person name="Dunn P."/>
            <person name="Durbin K.J."/>
            <person name="Evangelista C.C."/>
            <person name="Ferraz C."/>
            <person name="Ferriera S."/>
            <person name="Fleischmann W."/>
            <person name="Fosler C."/>
            <person name="Gabrielian A.E."/>
            <person name="Garg N.S."/>
            <person name="Gelbart W.M."/>
            <person name="Glasser K."/>
            <person name="Glodek A."/>
            <person name="Gong F."/>
            <person name="Gorrell J.H."/>
            <person name="Gu Z."/>
            <person name="Guan P."/>
            <person name="Harris M."/>
            <person name="Harris N.L."/>
            <person name="Harvey D.A."/>
            <person name="Heiman T.J."/>
            <person name="Hernandez J.R."/>
            <person name="Houck J."/>
            <person name="Hostin D."/>
            <person name="Houston K.A."/>
            <person name="Howland T.J."/>
            <person name="Wei M.-H."/>
            <person name="Ibegwam C."/>
            <person name="Jalali M."/>
            <person name="Kalush F."/>
            <person name="Karpen G.H."/>
            <person name="Ke Z."/>
            <person name="Kennison J.A."/>
            <person name="Ketchum K.A."/>
            <person name="Kimmel B.E."/>
            <person name="Kodira C.D."/>
            <person name="Kraft C.L."/>
            <person name="Kravitz S."/>
            <person name="Kulp D."/>
            <person name="Lai Z."/>
            <person name="Lasko P."/>
            <person name="Lei Y."/>
            <person name="Levitsky A.A."/>
            <person name="Li J.H."/>
            <person name="Li Z."/>
            <person name="Liang Y."/>
            <person name="Lin X."/>
            <person name="Liu X."/>
            <person name="Mattei B."/>
            <person name="McIntosh T.C."/>
            <person name="McLeod M.P."/>
            <person name="McPherson D."/>
            <person name="Merkulov G."/>
            <person name="Milshina N.V."/>
            <person name="Mobarry C."/>
            <person name="Morris J."/>
            <person name="Moshrefi A."/>
            <person name="Mount S.M."/>
            <person name="Moy M."/>
            <person name="Murphy B."/>
            <person name="Murphy L."/>
            <person name="Muzny D.M."/>
            <person name="Nelson D.L."/>
            <person name="Nelson D.R."/>
            <person name="Nelson K.A."/>
            <person name="Nixon K."/>
            <person name="Nusskern D.R."/>
            <person name="Pacleb J.M."/>
            <person name="Palazzolo M."/>
            <person name="Pittman G.S."/>
            <person name="Pan S."/>
            <person name="Pollard J."/>
            <person name="Puri V."/>
            <person name="Reese M.G."/>
            <person name="Reinert K."/>
            <person name="Remington K."/>
            <person name="Saunders R.D.C."/>
            <person name="Scheeler F."/>
            <person name="Shen H."/>
            <person name="Shue B.C."/>
            <person name="Siden-Kiamos I."/>
            <person name="Simpson M."/>
            <person name="Skupski M.P."/>
            <person name="Smith T.J."/>
            <person name="Spier E."/>
            <person name="Spradling A.C."/>
            <person name="Stapleton M."/>
            <person name="Strong R."/>
            <person name="Sun E."/>
            <person name="Svirskas R."/>
            <person name="Tector C."/>
            <person name="Turner R."/>
            <person name="Venter E."/>
            <person name="Wang A.H."/>
            <person name="Wang X."/>
            <person name="Wang Z.-Y."/>
            <person name="Wassarman D.A."/>
            <person name="Weinstock G.M."/>
            <person name="Weissenbach J."/>
            <person name="Williams S.M."/>
            <person name="Woodage T."/>
            <person name="Worley K.C."/>
            <person name="Wu D."/>
            <person name="Yang S."/>
            <person name="Yao Q.A."/>
            <person name="Ye J."/>
            <person name="Yeh R.-F."/>
            <person name="Zaveri J.S."/>
            <person name="Zhan M."/>
            <person name="Zhang G."/>
            <person name="Zhao Q."/>
            <person name="Zheng L."/>
            <person name="Zheng X.H."/>
            <person name="Zhong F.N."/>
            <person name="Zhong W."/>
            <person name="Zhou X."/>
            <person name="Zhu S.C."/>
            <person name="Zhu X."/>
            <person name="Smith H.O."/>
            <person name="Gibbs R.A."/>
            <person name="Myers E.W."/>
            <person name="Rubin G.M."/>
            <person name="Venter J.C."/>
        </authorList>
    </citation>
    <scope>NUCLEOTIDE SEQUENCE [LARGE SCALE GENOMIC DNA]</scope>
    <source>
        <strain evidence="6">Berkeley</strain>
    </source>
</reference>
<reference evidence="12 14" key="2">
    <citation type="journal article" date="2002" name="Genome Biol.">
        <title>Annotation of the Drosophila melanogaster euchromatic genome: a systematic review.</title>
        <authorList>
            <person name="Misra S."/>
            <person name="Crosby M.A."/>
            <person name="Mungall C.J."/>
            <person name="Matthews B.B."/>
            <person name="Campbell K.S."/>
            <person name="Hradecky P."/>
            <person name="Huang Y."/>
            <person name="Kaminker J.S."/>
            <person name="Millburn G.H."/>
            <person name="Prochnik S.E."/>
            <person name="Smith C.D."/>
            <person name="Tupy J.L."/>
            <person name="Whitfield E.J."/>
            <person name="Bayraktaroglu L."/>
            <person name="Berman B.P."/>
            <person name="Bettencourt B.R."/>
            <person name="Celniker S.E."/>
            <person name="de Grey A.D.N.J."/>
            <person name="Drysdale R.A."/>
            <person name="Harris N.L."/>
            <person name="Richter J."/>
            <person name="Russo S."/>
            <person name="Schroeder A.J."/>
            <person name="Shu S.Q."/>
            <person name="Stapleton M."/>
            <person name="Yamada C."/>
            <person name="Ashburner M."/>
            <person name="Gelbart W.M."/>
            <person name="Rubin G.M."/>
            <person name="Lewis S.E."/>
        </authorList>
    </citation>
    <scope>GENOME REANNOTATION</scope>
    <source>
        <strain>Berkeley</strain>
    </source>
</reference>
<reference evidence="12 13" key="3">
    <citation type="journal article" date="1997" name="J. Cell Biol.">
        <title>The Drosophila gene abnormal spindle encodes a novel microtubule-associated protein that associates with the polar regions of the mitotic spindle.</title>
        <authorList>
            <person name="Saunders R.D.C."/>
            <person name="do Carmo Avides M."/>
            <person name="Howard T.I.A."/>
            <person name="Gonzalez C."/>
            <person name="Glover D.M."/>
        </authorList>
    </citation>
    <scope>NUCLEOTIDE SEQUENCE [MRNA] OF 94-1954</scope>
    <scope>FUNCTION</scope>
    <scope>SUBCELLULAR LOCATION</scope>
    <scope>DEVELOPMENTAL STAGE</scope>
    <source>
        <strain evidence="13">Oregon-R</strain>
    </source>
</reference>
<reference evidence="12 15" key="4">
    <citation type="journal article" date="2002" name="Genome Biol.">
        <title>A Drosophila full-length cDNA resource.</title>
        <authorList>
            <person name="Stapleton M."/>
            <person name="Carlson J.W."/>
            <person name="Brokstein P."/>
            <person name="Yu C."/>
            <person name="Champe M."/>
            <person name="George R.A."/>
            <person name="Guarin H."/>
            <person name="Kronmiller B."/>
            <person name="Pacleb J.M."/>
            <person name="Park S."/>
            <person name="Wan K.H."/>
            <person name="Rubin G.M."/>
            <person name="Celniker S.E."/>
        </authorList>
    </citation>
    <scope>NUCLEOTIDE SEQUENCE [LARGE SCALE MRNA] OF 700-1954</scope>
    <source>
        <strain evidence="15">Berkeley</strain>
        <tissue evidence="7">Embryo</tissue>
    </source>
</reference>
<reference evidence="12" key="5">
    <citation type="journal article" date="1999" name="Science">
        <title>Abnormal spindle protein, Asp, and the integrity of mitotic centrosomal microtubule organizing centers.</title>
        <authorList>
            <person name="do Carmo Avides M."/>
            <person name="Glover D.M."/>
        </authorList>
    </citation>
    <scope>FUNCTION</scope>
    <scope>SUBCELLULAR LOCATION</scope>
</reference>
<reference key="6">
    <citation type="journal article" date="2004" name="Exp. Cell Res.">
        <title>The abnormal spindle protein is required for germ cell mitosis and oocyte differentiation during Drosophila oogenesis.</title>
        <authorList>
            <person name="Riparbelli M.G."/>
            <person name="Massarelli C."/>
            <person name="Robbins L.G."/>
            <person name="Callaini G."/>
        </authorList>
    </citation>
    <scope>FUNCTION</scope>
</reference>
<reference key="7">
    <citation type="journal article" date="2008" name="J. Proteome Res.">
        <title>Phosphoproteome analysis of Drosophila melanogaster embryos.</title>
        <authorList>
            <person name="Zhai B."/>
            <person name="Villen J."/>
            <person name="Beausoleil S.A."/>
            <person name="Mintseris J."/>
            <person name="Gygi S.P."/>
        </authorList>
    </citation>
    <scope>PHOSPHORYLATION [LARGE SCALE ANALYSIS] AT SER-151; SER-360; THR-364; SER-388; SER-390; SER-395; SER-398; SER-491; SER-495; SER-497; SER-501; SER-504 AND SER-514</scope>
    <scope>IDENTIFICATION BY MASS SPECTROMETRY</scope>
    <source>
        <tissue>Embryo</tissue>
    </source>
</reference>
<reference key="8">
    <citation type="journal article" date="2020" name="Nat. Cell Biol.">
        <title>A perinuclear microtubule-organizing centre controls nuclear positioning and basement membrane secretion.</title>
        <authorList>
            <person name="Zheng Y."/>
            <person name="Buchwalter R.A."/>
            <person name="Zheng C."/>
            <person name="Wight E.M."/>
            <person name="Chen J.V."/>
            <person name="Megraw T.L."/>
        </authorList>
    </citation>
    <scope>SUBCELLULAR LOCATION</scope>
    <scope>DISRUPTION PHENOTYPE</scope>
</reference>
<sequence>MSAFEITVTPSRLKQKKRAEGREPAVVVMAPFSAKAIVQFEDVPITKTARRQVRVLNPSDDDIEVKVMKAIREEHNLSLEWMEHTVPARDEVSMELVWSPVLEVACKETLQLIDNRNFRKEVMIILKSKSNQPVKNPRKFPTVGKTLQLKSPTGAGKTMKSVVSAAVQQKKRMSAAAAPPSKQTWRVTAPSRPAAWAHPPPQAPLVEKNVYKTPQEEPVYISPQPRSLKENLSPMTPGNLLDVIDNLRFTPLTETRGKGQATIFPDNLAAWPTPTLKGNVKSCANDMRPRRITPDDLEDQPATNKTFDVKHSETINISLDTLDCSRIDGQPHTPLNKTTTIVHATHTRALACIHEEEGPSPPRTPTKSAIHDLKRDIKLVGSPLRKYSESMKDLSLLSPQTKYAIQGSMPNLNEMKIRSIEQNRYYQEQQIQIKAKDLNSSSSSEASLAGQQEFLFNHSEILAQSSRFNLHEVGRKSVKGSPVKNPHKRRSHELSFSDAPSNESLYRNETVAISPPKKQRVEDTTLPRSAAPANASARSSSAHAWPHAQSKKFKLAQTMSLMKKPATPRKVRDTSIQPSVKLYDSELYMQTCINPDPFAATTTIDPFLASTMYLDEQAVDRHQADFKKWLNALVSIPADLDADLNNKIDVGKLFNEVRNKELVVAPTKEEQSMNYLTKYRLETLRKAAVELFFSEQMRLPCSKVAVYVNKQALRIRSDRNLHLDVVMQRTILELLLCFNPLWLRLGLEVVFGEKIQMQSNRDIVGLSTFILNRLFRNKCEEQRYSKAYTLTEEYAETIKKHSLQKILFLLLFLDQAKQKRIVKHNPCLFVKKSPHKETKDILLRFSSELLANIGDITRELRRLGYVLQHRQTFLDEFDYAFNNLAVDLRDGVRLTRVMEVILLRDDLTRQLRVPAISRLQRIFNVKLALGALGEANFQLGGDIAAQDIVDGHREKTLSLLWQLIYKFRSPKFHAAATVLQKWWRRHWLHVVIQRRIRHKELMRRHRAATVIQAVFRGHQMRKYVKLFKTERTQAAIILQKFTRRYLAQKQLYQSYHSIITIQRWWRAQQLGRQHRQRFVELREAAIFLQRIWRRRLFAKKLLAAAETARLQRSQKQQAAASYIQMQWRSYQLGRIQRQQFLRQRDLIMFVQRRMRSKWSMLEQRKEFQQLKRAAINIQQRWRAKLSMRKCNADYLALRSSVLKVQAYRKATIQMRIDRNHYYSLRKNVICLQQRLRAIMKMREQRENYLRLRNASILVQKRYRMRQQMIQDRNAYLRTRKCIINVQRRWRATLQMRRERKNYLHLQTTTKRIQIKFRAKREMKKQRAEFLQLKKVTLVVQKRRRALLQMRKERQEYLHLREVTIKLQRRFHAQKSMRFMRAKYRGTQAAVSCLQMHWRNHLLRKRERNSFLQLRQAAITLQRRYRARLNMIKQLKSYAQLKQAAITIQTRYRAKKAMQKQVVLYQKQREAIIKVQRRYRGNLEMRKQIEVYQKQRQAVIRLQKWWRSIRDMRLCKAGYRRIRLSSLSIQRKWRATVQARRQREIFLSTIRKVRLMQAFIRATLLMRQQRREFEMKRRAAVVIQRRFRARCAMLKARQDYQLIQSSVILVQRKFRANRSMKQARQEFVQLRTIAVHLQQKFRGKRLMIEQRNCFQLLRCSMPGFQARARGFMARKRFQALMTPEMMDLIRQKRAAKVIQRYWRGYLIRRRQKHQGLLDIRKRIAQLRQEAKAVNSVRCKVQEAVRFLRGRFIASDALAVLSRLDRLSRTVPHLLMWCSEFMSTFCYGIMAQAIRSEVDKQLIERCSRIILNLARYNSTTVNTFQEGGLVTIAQMLLRWCDKDSEIFNTLCTLIWVFAHCPKKRKIIHDYMTNPEAIYMVRETKKLVARKEKMKQNARKPPPMTSGRYKSQKINFTPCSLPSLEPDFGIIRYSPYTFISSVYAFDTILCKLQIDMF</sequence>
<protein>
    <recommendedName>
        <fullName>Protein abnormal spindle</fullName>
    </recommendedName>
</protein>
<comment type="function">
    <text evidence="5 8 11">Required to maintain the structure of the centrosomal microtubule organizing center (MTOC) during mitosis. May have a preferential role in regulating neurogenesis. Required for germ cell mitosis and oocyte differentiation.</text>
</comment>
<comment type="subcellular location">
    <subcellularLocation>
        <location evidence="5">Cytoplasm</location>
    </subcellularLocation>
    <subcellularLocation>
        <location evidence="5">Nucleus</location>
    </subcellularLocation>
    <subcellularLocation>
        <location evidence="5">Cytoplasm</location>
        <location evidence="5">Cytoskeleton</location>
        <location evidence="5">Spindle</location>
    </subcellularLocation>
    <subcellularLocation>
        <location evidence="10">Cytoplasm</location>
        <location evidence="10">Cytoskeleton</location>
        <location evidence="10">Microtubule organizing center</location>
    </subcellularLocation>
    <subcellularLocation>
        <location evidence="10">Cytoplasm</location>
        <location evidence="10">Perinuclear region</location>
    </subcellularLocation>
    <text evidence="5 10">During interphase in syncytial embryos distribution is cytoplasmic (PubMed:10073938). On entering mitosis, moves to polar regions of the spindle immediately surrounding the centrosome (PubMed:10073938). At telophase, migrates to microtubules on the spindle side of both daughter nuclei (PubMed:10073938). The nuclear-cytoplasmic distribution could be regulated by the availability of calmodulin (PubMed:10073938). In the fat body, localizes to a perinuclear non-centrosomal microtubule-organizing centers (ncMTOCs) (PubMed:32066907).</text>
</comment>
<comment type="developmental stage">
    <text evidence="11">Expressed both maternally and zygotically in embryos.</text>
</comment>
<comment type="disruption phenotype">
    <text evidence="10">RNAi-mediated knockdown has no effect on nuclear positioning in fat body cells.</text>
</comment>
<comment type="sequence caution" evidence="12">
    <conflict type="miscellaneous discrepancy">
        <sequence resource="EMBL-CDS" id="AAM11178"/>
    </conflict>
    <text>Intron retention.</text>
</comment>
<accession>Q9VC45</accession>
<accession>O01401</accession>
<accession>Q8SX66</accession>
<organism>
    <name type="scientific">Drosophila melanogaster</name>
    <name type="common">Fruit fly</name>
    <dbReference type="NCBI Taxonomy" id="7227"/>
    <lineage>
        <taxon>Eukaryota</taxon>
        <taxon>Metazoa</taxon>
        <taxon>Ecdysozoa</taxon>
        <taxon>Arthropoda</taxon>
        <taxon>Hexapoda</taxon>
        <taxon>Insecta</taxon>
        <taxon>Pterygota</taxon>
        <taxon>Neoptera</taxon>
        <taxon>Endopterygota</taxon>
        <taxon>Diptera</taxon>
        <taxon>Brachycera</taxon>
        <taxon>Muscomorpha</taxon>
        <taxon>Ephydroidea</taxon>
        <taxon>Drosophilidae</taxon>
        <taxon>Drosophila</taxon>
        <taxon>Sophophora</taxon>
    </lineage>
</organism>
<evidence type="ECO:0000255" key="1"/>
<evidence type="ECO:0000255" key="2">
    <source>
        <dbReference type="PROSITE-ProRule" id="PRU00044"/>
    </source>
</evidence>
<evidence type="ECO:0000255" key="3">
    <source>
        <dbReference type="PROSITE-ProRule" id="PRU00116"/>
    </source>
</evidence>
<evidence type="ECO:0000256" key="4">
    <source>
        <dbReference type="SAM" id="MobiDB-lite"/>
    </source>
</evidence>
<evidence type="ECO:0000269" key="5">
    <source>
    </source>
</evidence>
<evidence type="ECO:0000269" key="6">
    <source>
    </source>
</evidence>
<evidence type="ECO:0000269" key="7">
    <source>
    </source>
</evidence>
<evidence type="ECO:0000269" key="8">
    <source>
    </source>
</evidence>
<evidence type="ECO:0000269" key="9">
    <source>
    </source>
</evidence>
<evidence type="ECO:0000269" key="10">
    <source>
    </source>
</evidence>
<evidence type="ECO:0000269" key="11">
    <source>
    </source>
</evidence>
<evidence type="ECO:0000305" key="12"/>
<evidence type="ECO:0000312" key="13">
    <source>
        <dbReference type="EMBL" id="AAB51540.1"/>
    </source>
</evidence>
<evidence type="ECO:0000312" key="14">
    <source>
        <dbReference type="EMBL" id="AAF56330.3"/>
    </source>
</evidence>
<evidence type="ECO:0000312" key="15">
    <source>
        <dbReference type="EMBL" id="AAM11178.1"/>
    </source>
</evidence>
<gene>
    <name evidence="14" type="primary">asp</name>
    <name type="ORF">CG6875</name>
</gene>
<feature type="chain" id="PRO_0000191342" description="Protein abnormal spindle">
    <location>
        <begin position="1"/>
        <end position="1954"/>
    </location>
</feature>
<feature type="domain" description="Calponin-homology (CH)" evidence="2">
    <location>
        <begin position="836"/>
        <end position="968"/>
    </location>
</feature>
<feature type="domain" description="IQ 1" evidence="3">
    <location>
        <begin position="1004"/>
        <end position="1033"/>
    </location>
</feature>
<feature type="domain" description="IQ 2" evidence="3">
    <location>
        <begin position="1386"/>
        <end position="1415"/>
    </location>
</feature>
<feature type="domain" description="IQ 3" evidence="3">
    <location>
        <begin position="1467"/>
        <end position="1496"/>
    </location>
</feature>
<feature type="domain" description="IQ 4" evidence="3">
    <location>
        <begin position="1656"/>
        <end position="1687"/>
    </location>
</feature>
<feature type="domain" description="IQ 5" evidence="3">
    <location>
        <begin position="1690"/>
        <end position="1721"/>
    </location>
</feature>
<feature type="region of interest" description="Disordered" evidence="4">
    <location>
        <begin position="134"/>
        <end position="155"/>
    </location>
</feature>
<feature type="region of interest" description="Disordered" evidence="4">
    <location>
        <begin position="476"/>
        <end position="548"/>
    </location>
</feature>
<feature type="coiled-coil region" evidence="1">
    <location>
        <begin position="1614"/>
        <end position="1641"/>
    </location>
</feature>
<feature type="compositionally biased region" description="Polar residues" evidence="4">
    <location>
        <begin position="498"/>
        <end position="507"/>
    </location>
</feature>
<feature type="compositionally biased region" description="Low complexity" evidence="4">
    <location>
        <begin position="528"/>
        <end position="548"/>
    </location>
</feature>
<feature type="modified residue" description="Phosphoserine" evidence="9">
    <location>
        <position position="151"/>
    </location>
</feature>
<feature type="modified residue" description="Phosphoserine" evidence="9">
    <location>
        <position position="360"/>
    </location>
</feature>
<feature type="modified residue" description="Phosphothreonine" evidence="9">
    <location>
        <position position="364"/>
    </location>
</feature>
<feature type="modified residue" description="Phosphoserine" evidence="9">
    <location>
        <position position="388"/>
    </location>
</feature>
<feature type="modified residue" description="Phosphoserine" evidence="9">
    <location>
        <position position="390"/>
    </location>
</feature>
<feature type="modified residue" description="Phosphoserine" evidence="9">
    <location>
        <position position="395"/>
    </location>
</feature>
<feature type="modified residue" description="Phosphoserine" evidence="9">
    <location>
        <position position="398"/>
    </location>
</feature>
<feature type="modified residue" description="Phosphoserine" evidence="9">
    <location>
        <position position="491"/>
    </location>
</feature>
<feature type="modified residue" description="Phosphoserine" evidence="9">
    <location>
        <position position="495"/>
    </location>
</feature>
<feature type="modified residue" description="Phosphoserine" evidence="9">
    <location>
        <position position="497"/>
    </location>
</feature>
<feature type="modified residue" description="Phosphoserine" evidence="9">
    <location>
        <position position="501"/>
    </location>
</feature>
<feature type="modified residue" description="Phosphoserine" evidence="9">
    <location>
        <position position="504"/>
    </location>
</feature>
<feature type="modified residue" description="Phosphoserine" evidence="9">
    <location>
        <position position="514"/>
    </location>
</feature>
<feature type="sequence conflict" description="In Ref. 3; AAB51540." evidence="12" ref="3">
    <original>L</original>
    <variation>P</variation>
    <location>
        <position position="811"/>
    </location>
</feature>
<feature type="sequence conflict" description="In Ref. 3; AAB51540." evidence="12" ref="3">
    <original>M</original>
    <variation>V</variation>
    <location>
        <position position="898"/>
    </location>
</feature>
<feature type="sequence conflict" description="In Ref. 3; AAB51540." evidence="12" ref="3">
    <original>S</original>
    <variation>T</variation>
    <location>
        <position position="1129"/>
    </location>
</feature>
<feature type="sequence conflict" description="In Ref. 3; AAB51540." evidence="12" ref="3">
    <original>QQ</original>
    <variation>HE</variation>
    <location>
        <begin position="1138"/>
        <end position="1139"/>
    </location>
</feature>
<feature type="sequence conflict" description="In Ref. 3; AAB51540." evidence="12" ref="3">
    <original>R</original>
    <variation>Q</variation>
    <location>
        <position position="1761"/>
    </location>
</feature>
<keyword id="KW-0112">Calmodulin-binding</keyword>
<keyword id="KW-0131">Cell cycle</keyword>
<keyword id="KW-0132">Cell division</keyword>
<keyword id="KW-0175">Coiled coil</keyword>
<keyword id="KW-0963">Cytoplasm</keyword>
<keyword id="KW-0206">Cytoskeleton</keyword>
<keyword id="KW-0217">Developmental protein</keyword>
<keyword id="KW-0221">Differentiation</keyword>
<keyword id="KW-0493">Microtubule</keyword>
<keyword id="KW-0498">Mitosis</keyword>
<keyword id="KW-0539">Nucleus</keyword>
<keyword id="KW-0896">Oogenesis</keyword>
<keyword id="KW-0597">Phosphoprotein</keyword>
<keyword id="KW-1185">Reference proteome</keyword>
<keyword id="KW-0677">Repeat</keyword>
<dbReference type="EMBL" id="AE014297">
    <property type="protein sequence ID" value="AAF56330.3"/>
    <property type="molecule type" value="Genomic_DNA"/>
</dbReference>
<dbReference type="EMBL" id="U95171">
    <property type="protein sequence ID" value="AAB51540.1"/>
    <property type="molecule type" value="mRNA"/>
</dbReference>
<dbReference type="EMBL" id="AY094825">
    <property type="protein sequence ID" value="AAM11178.1"/>
    <property type="status" value="ALT_SEQ"/>
    <property type="molecule type" value="mRNA"/>
</dbReference>
<dbReference type="PIR" id="T13845">
    <property type="entry name" value="T13845"/>
</dbReference>
<dbReference type="RefSeq" id="NP_524488.3">
    <property type="nucleotide sequence ID" value="NM_079764.3"/>
</dbReference>
<dbReference type="SMR" id="Q9VC45"/>
<dbReference type="BioGRID" id="67871">
    <property type="interactions" value="20"/>
</dbReference>
<dbReference type="FunCoup" id="Q9VC45">
    <property type="interactions" value="69"/>
</dbReference>
<dbReference type="IntAct" id="Q9VC45">
    <property type="interactions" value="9"/>
</dbReference>
<dbReference type="MINT" id="Q9VC45"/>
<dbReference type="STRING" id="7227.FBpp0084071"/>
<dbReference type="GlyGen" id="Q9VC45">
    <property type="glycosylation" value="1 site"/>
</dbReference>
<dbReference type="iPTMnet" id="Q9VC45"/>
<dbReference type="PaxDb" id="7227-FBpp0084071"/>
<dbReference type="EnsemblMetazoa" id="FBtr0084692">
    <property type="protein sequence ID" value="FBpp0084071"/>
    <property type="gene ID" value="FBgn0000140"/>
</dbReference>
<dbReference type="GeneID" id="42946"/>
<dbReference type="KEGG" id="dme:Dmel_CG6875"/>
<dbReference type="AGR" id="FB:FBgn0000140"/>
<dbReference type="CTD" id="42946"/>
<dbReference type="FlyBase" id="FBgn0000140">
    <property type="gene designation" value="asp"/>
</dbReference>
<dbReference type="VEuPathDB" id="VectorBase:FBgn0000140"/>
<dbReference type="eggNOG" id="KOG0165">
    <property type="taxonomic scope" value="Eukaryota"/>
</dbReference>
<dbReference type="GeneTree" id="ENSGT00560000077332"/>
<dbReference type="HOGENOM" id="CLU_231302_0_0_1"/>
<dbReference type="InParanoid" id="Q9VC45"/>
<dbReference type="OMA" id="DFGIIRY"/>
<dbReference type="OrthoDB" id="2148418at2759"/>
<dbReference type="PhylomeDB" id="Q9VC45"/>
<dbReference type="SignaLink" id="Q9VC45"/>
<dbReference type="BioGRID-ORCS" id="42946">
    <property type="hits" value="0 hits in 3 CRISPR screens"/>
</dbReference>
<dbReference type="CD-CODE" id="2838EF58">
    <property type="entry name" value="Centrosome"/>
</dbReference>
<dbReference type="GenomeRNAi" id="42946"/>
<dbReference type="PRO" id="PR:Q9VC45"/>
<dbReference type="Proteomes" id="UP000000803">
    <property type="component" value="Chromosome 3R"/>
</dbReference>
<dbReference type="Bgee" id="FBgn0000140">
    <property type="expression patterns" value="Expressed in egg chamber and 46 other cell types or tissues"/>
</dbReference>
<dbReference type="ExpressionAtlas" id="Q9VC45">
    <property type="expression patterns" value="baseline and differential"/>
</dbReference>
<dbReference type="GO" id="GO:0005813">
    <property type="term" value="C:centrosome"/>
    <property type="evidence" value="ECO:0000314"/>
    <property type="project" value="FlyBase"/>
</dbReference>
<dbReference type="GO" id="GO:0005874">
    <property type="term" value="C:microtubule"/>
    <property type="evidence" value="ECO:0007669"/>
    <property type="project" value="UniProtKB-KW"/>
</dbReference>
<dbReference type="GO" id="GO:0005875">
    <property type="term" value="C:microtubule associated complex"/>
    <property type="evidence" value="ECO:0000314"/>
    <property type="project" value="FlyBase"/>
</dbReference>
<dbReference type="GO" id="GO:0005815">
    <property type="term" value="C:microtubule organizing center"/>
    <property type="evidence" value="ECO:0000314"/>
    <property type="project" value="UniProtKB"/>
</dbReference>
<dbReference type="GO" id="GO:0005634">
    <property type="term" value="C:nucleus"/>
    <property type="evidence" value="ECO:0007669"/>
    <property type="project" value="UniProtKB-SubCell"/>
</dbReference>
<dbReference type="GO" id="GO:0048471">
    <property type="term" value="C:perinuclear region of cytoplasm"/>
    <property type="evidence" value="ECO:0007669"/>
    <property type="project" value="UniProtKB-SubCell"/>
</dbReference>
<dbReference type="GO" id="GO:0000922">
    <property type="term" value="C:spindle pole"/>
    <property type="evidence" value="ECO:0000314"/>
    <property type="project" value="FlyBase"/>
</dbReference>
<dbReference type="GO" id="GO:0005516">
    <property type="term" value="F:calmodulin binding"/>
    <property type="evidence" value="ECO:0000314"/>
    <property type="project" value="FlyBase"/>
</dbReference>
<dbReference type="GO" id="GO:0008017">
    <property type="term" value="F:microtubule binding"/>
    <property type="evidence" value="ECO:0000314"/>
    <property type="project" value="UniProtKB"/>
</dbReference>
<dbReference type="GO" id="GO:0032027">
    <property type="term" value="F:myosin light chain binding"/>
    <property type="evidence" value="ECO:0000353"/>
    <property type="project" value="FlyBase"/>
</dbReference>
<dbReference type="GO" id="GO:0030036">
    <property type="term" value="P:actin cytoskeleton organization"/>
    <property type="evidence" value="ECO:0000315"/>
    <property type="project" value="FlyBase"/>
</dbReference>
<dbReference type="GO" id="GO:0030954">
    <property type="term" value="P:astral microtubule nucleation"/>
    <property type="evidence" value="ECO:0000315"/>
    <property type="project" value="FlyBase"/>
</dbReference>
<dbReference type="GO" id="GO:0048854">
    <property type="term" value="P:brain morphogenesis"/>
    <property type="evidence" value="ECO:0000315"/>
    <property type="project" value="FlyBase"/>
</dbReference>
<dbReference type="GO" id="GO:0051298">
    <property type="term" value="P:centrosome duplication"/>
    <property type="evidence" value="ECO:0000315"/>
    <property type="project" value="FlyBase"/>
</dbReference>
<dbReference type="GO" id="GO:0051642">
    <property type="term" value="P:centrosome localization"/>
    <property type="evidence" value="ECO:0000315"/>
    <property type="project" value="FlyBase"/>
</dbReference>
<dbReference type="GO" id="GO:0007282">
    <property type="term" value="P:cystoblast division"/>
    <property type="evidence" value="ECO:0000315"/>
    <property type="project" value="FlyBase"/>
</dbReference>
<dbReference type="GO" id="GO:0051295">
    <property type="term" value="P:establishment of meiotic spindle localization"/>
    <property type="evidence" value="ECO:0000315"/>
    <property type="project" value="FlyBase"/>
</dbReference>
<dbReference type="GO" id="GO:0000132">
    <property type="term" value="P:establishment of mitotic spindle orientation"/>
    <property type="evidence" value="ECO:0000315"/>
    <property type="project" value="FlyBase"/>
</dbReference>
<dbReference type="GO" id="GO:0048132">
    <property type="term" value="P:female germ-line stem cell asymmetric division"/>
    <property type="evidence" value="ECO:0000315"/>
    <property type="project" value="FlyBase"/>
</dbReference>
<dbReference type="GO" id="GO:0030706">
    <property type="term" value="P:germarium-derived oocyte differentiation"/>
    <property type="evidence" value="ECO:0000315"/>
    <property type="project" value="FlyBase"/>
</dbReference>
<dbReference type="GO" id="GO:0051383">
    <property type="term" value="P:kinetochore organization"/>
    <property type="evidence" value="ECO:0000315"/>
    <property type="project" value="FlyBase"/>
</dbReference>
<dbReference type="GO" id="GO:0000226">
    <property type="term" value="P:microtubule cytoskeleton organization"/>
    <property type="evidence" value="ECO:0000314"/>
    <property type="project" value="UniProtKB"/>
</dbReference>
<dbReference type="GO" id="GO:0000278">
    <property type="term" value="P:mitotic cell cycle"/>
    <property type="evidence" value="ECO:0000318"/>
    <property type="project" value="GO_Central"/>
</dbReference>
<dbReference type="GO" id="GO:0007052">
    <property type="term" value="P:mitotic spindle organization"/>
    <property type="evidence" value="ECO:0000315"/>
    <property type="project" value="FlyBase"/>
</dbReference>
<dbReference type="GO" id="GO:0007097">
    <property type="term" value="P:nuclear migration"/>
    <property type="evidence" value="ECO:0000315"/>
    <property type="project" value="FlyBase"/>
</dbReference>
<dbReference type="GO" id="GO:0048477">
    <property type="term" value="P:oogenesis"/>
    <property type="evidence" value="ECO:0000315"/>
    <property type="project" value="FlyBase"/>
</dbReference>
<dbReference type="GO" id="GO:0030723">
    <property type="term" value="P:ovarian fusome organization"/>
    <property type="evidence" value="ECO:0000315"/>
    <property type="project" value="FlyBase"/>
</dbReference>
<dbReference type="GO" id="GO:0007051">
    <property type="term" value="P:spindle organization"/>
    <property type="evidence" value="ECO:0000315"/>
    <property type="project" value="FlyBase"/>
</dbReference>
<dbReference type="CDD" id="cd21223">
    <property type="entry name" value="CH_ASPM_rpt1"/>
    <property type="match status" value="1"/>
</dbReference>
<dbReference type="CDD" id="cd23767">
    <property type="entry name" value="IQCD"/>
    <property type="match status" value="1"/>
</dbReference>
<dbReference type="FunFam" id="1.10.418.10:FF:000051">
    <property type="entry name" value="Abnormal spindle-like microcephaly-associated protein homolog"/>
    <property type="match status" value="1"/>
</dbReference>
<dbReference type="Gene3D" id="1.20.5.190">
    <property type="match status" value="2"/>
</dbReference>
<dbReference type="Gene3D" id="1.10.418.10">
    <property type="entry name" value="Calponin-like domain"/>
    <property type="match status" value="1"/>
</dbReference>
<dbReference type="InterPro" id="IPR031549">
    <property type="entry name" value="ASH"/>
</dbReference>
<dbReference type="InterPro" id="IPR051185">
    <property type="entry name" value="ASPM"/>
</dbReference>
<dbReference type="InterPro" id="IPR001715">
    <property type="entry name" value="CH_dom"/>
</dbReference>
<dbReference type="InterPro" id="IPR036872">
    <property type="entry name" value="CH_dom_sf"/>
</dbReference>
<dbReference type="InterPro" id="IPR000048">
    <property type="entry name" value="IQ_motif_EF-hand-BS"/>
</dbReference>
<dbReference type="PANTHER" id="PTHR22706">
    <property type="entry name" value="ASSEMBLY FACTOR FOR SPINDLE MICROTUBULES"/>
    <property type="match status" value="1"/>
</dbReference>
<dbReference type="PANTHER" id="PTHR22706:SF1">
    <property type="entry name" value="ASSEMBLY FACTOR FOR SPINDLE MICROTUBULES"/>
    <property type="match status" value="1"/>
</dbReference>
<dbReference type="Pfam" id="PF15780">
    <property type="entry name" value="ASH"/>
    <property type="match status" value="1"/>
</dbReference>
<dbReference type="Pfam" id="PF00612">
    <property type="entry name" value="IQ"/>
    <property type="match status" value="7"/>
</dbReference>
<dbReference type="SMART" id="SM00033">
    <property type="entry name" value="CH"/>
    <property type="match status" value="1"/>
</dbReference>
<dbReference type="SMART" id="SM00015">
    <property type="entry name" value="IQ"/>
    <property type="match status" value="16"/>
</dbReference>
<dbReference type="SUPFAM" id="SSF47576">
    <property type="entry name" value="Calponin-homology domain, CH-domain"/>
    <property type="match status" value="1"/>
</dbReference>
<dbReference type="PROSITE" id="PS50021">
    <property type="entry name" value="CH"/>
    <property type="match status" value="1"/>
</dbReference>
<dbReference type="PROSITE" id="PS50096">
    <property type="entry name" value="IQ"/>
    <property type="match status" value="5"/>
</dbReference>